<reference key="1">
    <citation type="journal article" date="2007" name="PLoS ONE">
        <title>The complete genome sequence and analysis of the Epsilonproteobacterium Arcobacter butzleri.</title>
        <authorList>
            <person name="Miller W.G."/>
            <person name="Parker C.T."/>
            <person name="Rubenfield M."/>
            <person name="Mendz G.L."/>
            <person name="Woesten M.M.S.M."/>
            <person name="Ussery D.W."/>
            <person name="Stolz J.F."/>
            <person name="Binnewies T.T."/>
            <person name="Hallin P.F."/>
            <person name="Wang G."/>
            <person name="Malek J.A."/>
            <person name="Rogosin A."/>
            <person name="Stanker L.H."/>
            <person name="Mandrell R.E."/>
        </authorList>
    </citation>
    <scope>NUCLEOTIDE SEQUENCE [LARGE SCALE GENOMIC DNA]</scope>
    <source>
        <strain>RM4018</strain>
    </source>
</reference>
<gene>
    <name evidence="1" type="primary">ureB</name>
    <name type="ordered locus">Abu_0807</name>
</gene>
<protein>
    <recommendedName>
        <fullName evidence="1">Urease subunit beta</fullName>
        <ecNumber evidence="1">3.5.1.5</ecNumber>
    </recommendedName>
    <alternativeName>
        <fullName evidence="1">Urea amidohydrolase subunit beta</fullName>
    </alternativeName>
</protein>
<evidence type="ECO:0000255" key="1">
    <source>
        <dbReference type="HAMAP-Rule" id="MF_01953"/>
    </source>
</evidence>
<evidence type="ECO:0000305" key="2"/>
<comment type="catalytic activity">
    <reaction evidence="1">
        <text>urea + 2 H2O + H(+) = hydrogencarbonate + 2 NH4(+)</text>
        <dbReference type="Rhea" id="RHEA:20557"/>
        <dbReference type="ChEBI" id="CHEBI:15377"/>
        <dbReference type="ChEBI" id="CHEBI:15378"/>
        <dbReference type="ChEBI" id="CHEBI:16199"/>
        <dbReference type="ChEBI" id="CHEBI:17544"/>
        <dbReference type="ChEBI" id="CHEBI:28938"/>
        <dbReference type="EC" id="3.5.1.5"/>
    </reaction>
</comment>
<comment type="cofactor">
    <cofactor evidence="1">
        <name>Ni cation</name>
        <dbReference type="ChEBI" id="CHEBI:25516"/>
    </cofactor>
    <text evidence="1">Binds 2 nickel ions per subunit.</text>
</comment>
<comment type="pathway">
    <text evidence="1">Nitrogen metabolism; urea degradation; CO(2) and NH(3) from urea (urease route): step 1/1.</text>
</comment>
<comment type="subunit">
    <text evidence="1">Heterohexamer of 3 UreA (alpha) and 3 UreB (beta) subunits.</text>
</comment>
<comment type="subcellular location">
    <subcellularLocation>
        <location evidence="1">Cytoplasm</location>
    </subcellularLocation>
</comment>
<comment type="PTM">
    <text evidence="1">Carboxylation allows a single lysine to coordinate two nickel ions.</text>
</comment>
<comment type="similarity">
    <text evidence="1">Belongs to the metallo-dependent hydrolases superfamily. Urease alpha subunit family.</text>
</comment>
<comment type="caution">
    <text evidence="2">The orthologous protein is known as the alpha subunit (UreC) in most other bacteria.</text>
</comment>
<keyword id="KW-0963">Cytoplasm</keyword>
<keyword id="KW-0378">Hydrolase</keyword>
<keyword id="KW-0479">Metal-binding</keyword>
<keyword id="KW-0533">Nickel</keyword>
<keyword id="KW-1185">Reference proteome</keyword>
<feature type="chain" id="PRO_1000070645" description="Urease subunit beta">
    <location>
        <begin position="1"/>
        <end position="566"/>
    </location>
</feature>
<feature type="domain" description="Urease" evidence="1">
    <location>
        <begin position="129"/>
        <end position="566"/>
    </location>
</feature>
<feature type="active site" description="Proton donor" evidence="1">
    <location>
        <position position="320"/>
    </location>
</feature>
<feature type="binding site" evidence="1">
    <location>
        <position position="134"/>
    </location>
    <ligand>
        <name>Ni(2+)</name>
        <dbReference type="ChEBI" id="CHEBI:49786"/>
        <label>1</label>
    </ligand>
</feature>
<feature type="binding site" evidence="1">
    <location>
        <position position="136"/>
    </location>
    <ligand>
        <name>Ni(2+)</name>
        <dbReference type="ChEBI" id="CHEBI:49786"/>
        <label>1</label>
    </ligand>
</feature>
<feature type="binding site" description="via carbamate group" evidence="1">
    <location>
        <position position="217"/>
    </location>
    <ligand>
        <name>Ni(2+)</name>
        <dbReference type="ChEBI" id="CHEBI:49786"/>
        <label>1</label>
    </ligand>
</feature>
<feature type="binding site" description="via carbamate group" evidence="1">
    <location>
        <position position="217"/>
    </location>
    <ligand>
        <name>Ni(2+)</name>
        <dbReference type="ChEBI" id="CHEBI:49786"/>
        <label>2</label>
    </ligand>
</feature>
<feature type="binding site" evidence="1">
    <location>
        <position position="219"/>
    </location>
    <ligand>
        <name>substrate</name>
    </ligand>
</feature>
<feature type="binding site" evidence="1">
    <location>
        <position position="246"/>
    </location>
    <ligand>
        <name>Ni(2+)</name>
        <dbReference type="ChEBI" id="CHEBI:49786"/>
        <label>2</label>
    </ligand>
</feature>
<feature type="binding site" evidence="1">
    <location>
        <position position="272"/>
    </location>
    <ligand>
        <name>Ni(2+)</name>
        <dbReference type="ChEBI" id="CHEBI:49786"/>
        <label>2</label>
    </ligand>
</feature>
<feature type="binding site" evidence="1">
    <location>
        <position position="360"/>
    </location>
    <ligand>
        <name>Ni(2+)</name>
        <dbReference type="ChEBI" id="CHEBI:49786"/>
        <label>1</label>
    </ligand>
</feature>
<feature type="modified residue" description="N6-carboxylysine" evidence="1">
    <location>
        <position position="217"/>
    </location>
</feature>
<dbReference type="EC" id="3.5.1.5" evidence="1"/>
<dbReference type="EMBL" id="CP000361">
    <property type="protein sequence ID" value="ABV67072.1"/>
    <property type="molecule type" value="Genomic_DNA"/>
</dbReference>
<dbReference type="RefSeq" id="WP_012012549.1">
    <property type="nucleotide sequence ID" value="NC_009850.1"/>
</dbReference>
<dbReference type="SMR" id="A8ESZ8"/>
<dbReference type="STRING" id="367737.Abu_0807"/>
<dbReference type="MEROPS" id="M38.982"/>
<dbReference type="GeneID" id="24305076"/>
<dbReference type="KEGG" id="abu:Abu_0807"/>
<dbReference type="eggNOG" id="COG0804">
    <property type="taxonomic scope" value="Bacteria"/>
</dbReference>
<dbReference type="HOGENOM" id="CLU_000980_0_0_7"/>
<dbReference type="UniPathway" id="UPA00258">
    <property type="reaction ID" value="UER00370"/>
</dbReference>
<dbReference type="Proteomes" id="UP000001136">
    <property type="component" value="Chromosome"/>
</dbReference>
<dbReference type="GO" id="GO:0005737">
    <property type="term" value="C:cytoplasm"/>
    <property type="evidence" value="ECO:0007669"/>
    <property type="project" value="UniProtKB-SubCell"/>
</dbReference>
<dbReference type="GO" id="GO:0016151">
    <property type="term" value="F:nickel cation binding"/>
    <property type="evidence" value="ECO:0007669"/>
    <property type="project" value="UniProtKB-UniRule"/>
</dbReference>
<dbReference type="GO" id="GO:0009039">
    <property type="term" value="F:urease activity"/>
    <property type="evidence" value="ECO:0007669"/>
    <property type="project" value="UniProtKB-UniRule"/>
</dbReference>
<dbReference type="GO" id="GO:0043419">
    <property type="term" value="P:urea catabolic process"/>
    <property type="evidence" value="ECO:0007669"/>
    <property type="project" value="UniProtKB-UniRule"/>
</dbReference>
<dbReference type="CDD" id="cd00375">
    <property type="entry name" value="Urease_alpha"/>
    <property type="match status" value="1"/>
</dbReference>
<dbReference type="Gene3D" id="3.20.20.140">
    <property type="entry name" value="Metal-dependent hydrolases"/>
    <property type="match status" value="1"/>
</dbReference>
<dbReference type="Gene3D" id="2.30.40.10">
    <property type="entry name" value="Urease, subunit C, domain 1"/>
    <property type="match status" value="1"/>
</dbReference>
<dbReference type="HAMAP" id="MF_01953">
    <property type="entry name" value="Urease_alpha"/>
    <property type="match status" value="1"/>
</dbReference>
<dbReference type="InterPro" id="IPR006680">
    <property type="entry name" value="Amidohydro-rel"/>
</dbReference>
<dbReference type="InterPro" id="IPR011059">
    <property type="entry name" value="Metal-dep_hydrolase_composite"/>
</dbReference>
<dbReference type="InterPro" id="IPR032466">
    <property type="entry name" value="Metal_Hydrolase"/>
</dbReference>
<dbReference type="InterPro" id="IPR011612">
    <property type="entry name" value="Urease_alpha_N_dom"/>
</dbReference>
<dbReference type="InterPro" id="IPR050112">
    <property type="entry name" value="Urease_alpha_subunit"/>
</dbReference>
<dbReference type="InterPro" id="IPR017950">
    <property type="entry name" value="Urease_AS"/>
</dbReference>
<dbReference type="InterPro" id="IPR005848">
    <property type="entry name" value="Urease_asu"/>
</dbReference>
<dbReference type="InterPro" id="IPR017951">
    <property type="entry name" value="Urease_asu_c"/>
</dbReference>
<dbReference type="InterPro" id="IPR029754">
    <property type="entry name" value="Urease_Ni-bd"/>
</dbReference>
<dbReference type="NCBIfam" id="NF009686">
    <property type="entry name" value="PRK13207.1"/>
    <property type="match status" value="1"/>
</dbReference>
<dbReference type="NCBIfam" id="TIGR01792">
    <property type="entry name" value="urease_alph"/>
    <property type="match status" value="1"/>
</dbReference>
<dbReference type="PANTHER" id="PTHR43440">
    <property type="entry name" value="UREASE"/>
    <property type="match status" value="1"/>
</dbReference>
<dbReference type="PANTHER" id="PTHR43440:SF1">
    <property type="entry name" value="UREASE"/>
    <property type="match status" value="1"/>
</dbReference>
<dbReference type="Pfam" id="PF01979">
    <property type="entry name" value="Amidohydro_1"/>
    <property type="match status" value="1"/>
</dbReference>
<dbReference type="Pfam" id="PF00449">
    <property type="entry name" value="Urease_alpha"/>
    <property type="match status" value="1"/>
</dbReference>
<dbReference type="PRINTS" id="PR01752">
    <property type="entry name" value="UREASE"/>
</dbReference>
<dbReference type="SUPFAM" id="SSF51338">
    <property type="entry name" value="Composite domain of metallo-dependent hydrolases"/>
    <property type="match status" value="2"/>
</dbReference>
<dbReference type="SUPFAM" id="SSF51556">
    <property type="entry name" value="Metallo-dependent hydrolases"/>
    <property type="match status" value="1"/>
</dbReference>
<dbReference type="PROSITE" id="PS01120">
    <property type="entry name" value="UREASE_1"/>
    <property type="match status" value="1"/>
</dbReference>
<dbReference type="PROSITE" id="PS00145">
    <property type="entry name" value="UREASE_2"/>
    <property type="match status" value="1"/>
</dbReference>
<dbReference type="PROSITE" id="PS51368">
    <property type="entry name" value="UREASE_3"/>
    <property type="match status" value="1"/>
</dbReference>
<organism>
    <name type="scientific">Aliarcobacter butzleri (strain RM4018)</name>
    <name type="common">Arcobacter butzleri</name>
    <dbReference type="NCBI Taxonomy" id="367737"/>
    <lineage>
        <taxon>Bacteria</taxon>
        <taxon>Pseudomonadati</taxon>
        <taxon>Campylobacterota</taxon>
        <taxon>Epsilonproteobacteria</taxon>
        <taxon>Campylobacterales</taxon>
        <taxon>Arcobacteraceae</taxon>
        <taxon>Aliarcobacter</taxon>
    </lineage>
</organism>
<name>URE1_ALIB4</name>
<proteinExistence type="inferred from homology"/>
<accession>A8ESZ8</accession>
<sequence>MKISKEKYASMYGPTTGDRFRLADTTLIAKIEKDYTIYGEESKFGGGKTVRDGMAQSPTAVDVADLIITNAIIIDYTGIYKADIGIKDGKILAIGKSGNPNLCDGITEGLEIGANTEILSAEGKIITAGGIDTHIHFISPGQINEALSSGVTTMIGGGTGPNTGTNATTCTPGEWNISKMIQSVDDLPLNFGFMGKGNSSSYEALKVQIEAGAMGLKLHEDWGSTPNAIDTCLSVADDFDVQVAIHTDTLNESGFVEATVGAFKNRTIHTFHSEGAGGGHAPDIMKVAGLSNVLPSSTNPTLPYTKNTIEEHLDMLMVCHHLSPKIPEDVSFAESRIRGKTIAAEDVLHDLGAISITSSDSQAMGRVGEVIIRTWQVAHSMKQQRGTLEGDDEKSDNNRIKRYIAKYTINPAIACGIDEYVGSVEVGKMADLVLWNRAFFGVKPEIIIKGGFIALAMMGDSNASIPTPEPNMYRLMFGSLGRASGATSVIFTSKVASSNLKDKLGISKNVLPVKNTRNIGKANMKLNDFIGDIEIDSETYDVKINGEPIESNYVEKVPMARRYFMF</sequence>